<keyword id="KW-0963">Cytoplasm</keyword>
<keyword id="KW-0238">DNA-binding</keyword>
<keyword id="KW-0539">Nucleus</keyword>
<keyword id="KW-1185">Reference proteome</keyword>
<keyword id="KW-0694">RNA-binding</keyword>
<evidence type="ECO:0000250" key="1"/>
<evidence type="ECO:0000255" key="2">
    <source>
        <dbReference type="PROSITE-ProRule" id="PRU00176"/>
    </source>
</evidence>
<comment type="function">
    <text evidence="1">May confer resistance to the antitumor agent cisplatin. Binds to DNA and RNA (By similarity).</text>
</comment>
<comment type="subunit">
    <text evidence="1">Homodimer.</text>
</comment>
<comment type="subcellular location">
    <subcellularLocation>
        <location>Nucleus</location>
    </subcellularLocation>
    <subcellularLocation>
        <location>Cytoplasm</location>
    </subcellularLocation>
    <subcellularLocation>
        <location evidence="1">Nucleus</location>
        <location evidence="1">Nucleolus</location>
    </subcellularLocation>
</comment>
<sequence length="280" mass="31526">MDIEVDIIEFKVPLENNKTIFIWDIQPTFTEAYIYESLWSVYSAFGDLYLLKVCPNATVAEPGFYALVKFYSSAQASKAQRATDKQCLFQSSPLKVRLSTKQNLSFYSSKPLCLSKCHNLANHYLGFGGWTTRIVTLKDLSNCVDAGCQEETGDQGVLLKYGCIMELSFPHHGMSCQGVGVAEEVLDSDQDPEEKLRKRGALMKRAKDKAMEVAFEKVLLLILGNGKVAIEIKIDPDEIVPEENSERVIKVNDISWTHIESADSNAEEDFLWDLTEDLPY</sequence>
<reference key="1">
    <citation type="submission" date="2004-11" db="EMBL/GenBank/DDBJ databases">
        <authorList>
            <consortium name="NIH - Zebrafish Gene Collection (ZGC) project"/>
        </authorList>
    </citation>
    <scope>NUCLEOTIDE SEQUENCE [LARGE SCALE MRNA]</scope>
    <source>
        <tissue>Ovary</tissue>
    </source>
</reference>
<accession>Q5U3G4</accession>
<proteinExistence type="evidence at transcript level"/>
<organism>
    <name type="scientific">Danio rerio</name>
    <name type="common">Zebrafish</name>
    <name type="synonym">Brachydanio rerio</name>
    <dbReference type="NCBI Taxonomy" id="7955"/>
    <lineage>
        <taxon>Eukaryota</taxon>
        <taxon>Metazoa</taxon>
        <taxon>Chordata</taxon>
        <taxon>Craniata</taxon>
        <taxon>Vertebrata</taxon>
        <taxon>Euteleostomi</taxon>
        <taxon>Actinopterygii</taxon>
        <taxon>Neopterygii</taxon>
        <taxon>Teleostei</taxon>
        <taxon>Ostariophysi</taxon>
        <taxon>Cypriniformes</taxon>
        <taxon>Danionidae</taxon>
        <taxon>Danioninae</taxon>
        <taxon>Danio</taxon>
    </lineage>
</organism>
<gene>
    <name type="primary">rdm1</name>
    <name type="ORF">zgc:103564</name>
</gene>
<protein>
    <recommendedName>
        <fullName>RAD52 motif-containing protein 1</fullName>
    </recommendedName>
</protein>
<dbReference type="EMBL" id="BC085554">
    <property type="protein sequence ID" value="AAH85554.1"/>
    <property type="molecule type" value="mRNA"/>
</dbReference>
<dbReference type="RefSeq" id="NP_001007334.1">
    <property type="nucleotide sequence ID" value="NM_001007333.1"/>
</dbReference>
<dbReference type="FunCoup" id="Q5U3G4">
    <property type="interactions" value="367"/>
</dbReference>
<dbReference type="STRING" id="7955.ENSDARP00000055675"/>
<dbReference type="PaxDb" id="7955-ENSDARP00000055675"/>
<dbReference type="GeneID" id="492461"/>
<dbReference type="KEGG" id="dre:492461"/>
<dbReference type="AGR" id="ZFIN:ZDB-GENE-041114-14"/>
<dbReference type="CTD" id="201299"/>
<dbReference type="ZFIN" id="ZDB-GENE-041114-14">
    <property type="gene designation" value="rdm1"/>
</dbReference>
<dbReference type="eggNOG" id="ENOG502RXM9">
    <property type="taxonomic scope" value="Eukaryota"/>
</dbReference>
<dbReference type="InParanoid" id="Q5U3G4"/>
<dbReference type="OrthoDB" id="6287754at2759"/>
<dbReference type="PhylomeDB" id="Q5U3G4"/>
<dbReference type="PRO" id="PR:Q5U3G4"/>
<dbReference type="Proteomes" id="UP000000437">
    <property type="component" value="Chromosome 3"/>
</dbReference>
<dbReference type="GO" id="GO:0005737">
    <property type="term" value="C:cytoplasm"/>
    <property type="evidence" value="ECO:0007669"/>
    <property type="project" value="UniProtKB-SubCell"/>
</dbReference>
<dbReference type="GO" id="GO:0005730">
    <property type="term" value="C:nucleolus"/>
    <property type="evidence" value="ECO:0000318"/>
    <property type="project" value="GO_Central"/>
</dbReference>
<dbReference type="GO" id="GO:0003677">
    <property type="term" value="F:DNA binding"/>
    <property type="evidence" value="ECO:0007669"/>
    <property type="project" value="UniProtKB-KW"/>
</dbReference>
<dbReference type="GO" id="GO:0003723">
    <property type="term" value="F:RNA binding"/>
    <property type="evidence" value="ECO:0007669"/>
    <property type="project" value="UniProtKB-KW"/>
</dbReference>
<dbReference type="CDD" id="cd12364">
    <property type="entry name" value="RRM_RDM1"/>
    <property type="match status" value="1"/>
</dbReference>
<dbReference type="Gene3D" id="3.30.70.330">
    <property type="match status" value="1"/>
</dbReference>
<dbReference type="InterPro" id="IPR012677">
    <property type="entry name" value="Nucleotide-bd_a/b_plait_sf"/>
</dbReference>
<dbReference type="InterPro" id="IPR035979">
    <property type="entry name" value="RBD_domain_sf"/>
</dbReference>
<dbReference type="InterPro" id="IPR040224">
    <property type="entry name" value="RDM1"/>
</dbReference>
<dbReference type="InterPro" id="IPR034200">
    <property type="entry name" value="RDM1_RRM"/>
</dbReference>
<dbReference type="InterPro" id="IPR000504">
    <property type="entry name" value="RRM_dom"/>
</dbReference>
<dbReference type="PANTHER" id="PTHR31164">
    <property type="entry name" value="RAD52 MOTIF-CONTAINING PROTEIN 1"/>
    <property type="match status" value="1"/>
</dbReference>
<dbReference type="PANTHER" id="PTHR31164:SF1">
    <property type="entry name" value="RAD52 MOTIF-CONTAINING PROTEIN 1"/>
    <property type="match status" value="1"/>
</dbReference>
<dbReference type="SUPFAM" id="SSF54768">
    <property type="entry name" value="dsRNA-binding domain-like"/>
    <property type="match status" value="1"/>
</dbReference>
<dbReference type="SUPFAM" id="SSF54928">
    <property type="entry name" value="RNA-binding domain, RBD"/>
    <property type="match status" value="1"/>
</dbReference>
<dbReference type="PROSITE" id="PS50102">
    <property type="entry name" value="RRM"/>
    <property type="match status" value="1"/>
</dbReference>
<feature type="chain" id="PRO_0000299532" description="RAD52 motif-containing protein 1">
    <location>
        <begin position="1"/>
        <end position="280"/>
    </location>
</feature>
<feature type="domain" description="RRM" evidence="2">
    <location>
        <begin position="18"/>
        <end position="101"/>
    </location>
</feature>
<name>RDM1_DANRE</name>